<gene>
    <name type="primary">skp</name>
    <name type="synonym">hlpA</name>
    <name type="ordered locus">Z0190</name>
    <name type="ordered locus">ECs0180</name>
</gene>
<dbReference type="EMBL" id="AE005174">
    <property type="protein sequence ID" value="AAG54480.1"/>
    <property type="molecule type" value="Genomic_DNA"/>
</dbReference>
<dbReference type="EMBL" id="BA000007">
    <property type="protein sequence ID" value="BAB33603.1"/>
    <property type="molecule type" value="Genomic_DNA"/>
</dbReference>
<dbReference type="PIR" id="D85502">
    <property type="entry name" value="D85502"/>
</dbReference>
<dbReference type="PIR" id="D90651">
    <property type="entry name" value="D90651"/>
</dbReference>
<dbReference type="RefSeq" id="NP_308207.1">
    <property type="nucleotide sequence ID" value="NC_002695.1"/>
</dbReference>
<dbReference type="RefSeq" id="WP_000758956.1">
    <property type="nucleotide sequence ID" value="NZ_VOAI01000002.1"/>
</dbReference>
<dbReference type="BMRB" id="P0AEU9"/>
<dbReference type="SMR" id="P0AEU9"/>
<dbReference type="IntAct" id="P0AEU9">
    <property type="interactions" value="1"/>
</dbReference>
<dbReference type="STRING" id="155864.Z0190"/>
<dbReference type="GeneID" id="913889"/>
<dbReference type="GeneID" id="93777247"/>
<dbReference type="KEGG" id="ece:Z0190"/>
<dbReference type="KEGG" id="ecs:ECs_0180"/>
<dbReference type="PATRIC" id="fig|386585.9.peg.283"/>
<dbReference type="eggNOG" id="COG2825">
    <property type="taxonomic scope" value="Bacteria"/>
</dbReference>
<dbReference type="HOGENOM" id="CLU_101388_2_0_6"/>
<dbReference type="OMA" id="MENDLQS"/>
<dbReference type="Proteomes" id="UP000000558">
    <property type="component" value="Chromosome"/>
</dbReference>
<dbReference type="Proteomes" id="UP000002519">
    <property type="component" value="Chromosome"/>
</dbReference>
<dbReference type="GO" id="GO:0005829">
    <property type="term" value="C:cytosol"/>
    <property type="evidence" value="ECO:0007669"/>
    <property type="project" value="TreeGrafter"/>
</dbReference>
<dbReference type="GO" id="GO:0042597">
    <property type="term" value="C:periplasmic space"/>
    <property type="evidence" value="ECO:0007669"/>
    <property type="project" value="UniProtKB-SubCell"/>
</dbReference>
<dbReference type="GO" id="GO:0051082">
    <property type="term" value="F:unfolded protein binding"/>
    <property type="evidence" value="ECO:0007669"/>
    <property type="project" value="InterPro"/>
</dbReference>
<dbReference type="GO" id="GO:0061077">
    <property type="term" value="P:chaperone-mediated protein folding"/>
    <property type="evidence" value="ECO:0007669"/>
    <property type="project" value="TreeGrafter"/>
</dbReference>
<dbReference type="GO" id="GO:0050821">
    <property type="term" value="P:protein stabilization"/>
    <property type="evidence" value="ECO:0007669"/>
    <property type="project" value="TreeGrafter"/>
</dbReference>
<dbReference type="FunFam" id="3.30.910.20:FF:000001">
    <property type="entry name" value="Molecular chaperone Skp"/>
    <property type="match status" value="1"/>
</dbReference>
<dbReference type="Gene3D" id="3.30.910.20">
    <property type="entry name" value="Skp domain"/>
    <property type="match status" value="1"/>
</dbReference>
<dbReference type="InterPro" id="IPR005632">
    <property type="entry name" value="Chaperone_Skp"/>
</dbReference>
<dbReference type="InterPro" id="IPR024930">
    <property type="entry name" value="Skp_dom_sf"/>
</dbReference>
<dbReference type="NCBIfam" id="NF008047">
    <property type="entry name" value="PRK10780.1"/>
    <property type="match status" value="1"/>
</dbReference>
<dbReference type="PANTHER" id="PTHR35089">
    <property type="entry name" value="CHAPERONE PROTEIN SKP"/>
    <property type="match status" value="1"/>
</dbReference>
<dbReference type="PANTHER" id="PTHR35089:SF1">
    <property type="entry name" value="CHAPERONE PROTEIN SKP"/>
    <property type="match status" value="1"/>
</dbReference>
<dbReference type="Pfam" id="PF03938">
    <property type="entry name" value="OmpH"/>
    <property type="match status" value="1"/>
</dbReference>
<dbReference type="PIRSF" id="PIRSF002094">
    <property type="entry name" value="OMP26_Skp"/>
    <property type="match status" value="1"/>
</dbReference>
<dbReference type="SMART" id="SM00935">
    <property type="entry name" value="OmpH"/>
    <property type="match status" value="1"/>
</dbReference>
<dbReference type="SUPFAM" id="SSF111384">
    <property type="entry name" value="OmpH-like"/>
    <property type="match status" value="1"/>
</dbReference>
<name>SKP_ECO57</name>
<proteinExistence type="inferred from homology"/>
<organism>
    <name type="scientific">Escherichia coli O157:H7</name>
    <dbReference type="NCBI Taxonomy" id="83334"/>
    <lineage>
        <taxon>Bacteria</taxon>
        <taxon>Pseudomonadati</taxon>
        <taxon>Pseudomonadota</taxon>
        <taxon>Gammaproteobacteria</taxon>
        <taxon>Enterobacterales</taxon>
        <taxon>Enterobacteriaceae</taxon>
        <taxon>Escherichia</taxon>
    </lineage>
</organism>
<keyword id="KW-0143">Chaperone</keyword>
<keyword id="KW-0574">Periplasm</keyword>
<keyword id="KW-1185">Reference proteome</keyword>
<keyword id="KW-0732">Signal</keyword>
<accession>P0AEU9</accession>
<accession>P11457</accession>
<reference key="1">
    <citation type="journal article" date="2001" name="Nature">
        <title>Genome sequence of enterohaemorrhagic Escherichia coli O157:H7.</title>
        <authorList>
            <person name="Perna N.T."/>
            <person name="Plunkett G. III"/>
            <person name="Burland V."/>
            <person name="Mau B."/>
            <person name="Glasner J.D."/>
            <person name="Rose D.J."/>
            <person name="Mayhew G.F."/>
            <person name="Evans P.S."/>
            <person name="Gregor J."/>
            <person name="Kirkpatrick H.A."/>
            <person name="Posfai G."/>
            <person name="Hackett J."/>
            <person name="Klink S."/>
            <person name="Boutin A."/>
            <person name="Shao Y."/>
            <person name="Miller L."/>
            <person name="Grotbeck E.J."/>
            <person name="Davis N.W."/>
            <person name="Lim A."/>
            <person name="Dimalanta E.T."/>
            <person name="Potamousis K."/>
            <person name="Apodaca J."/>
            <person name="Anantharaman T.S."/>
            <person name="Lin J."/>
            <person name="Yen G."/>
            <person name="Schwartz D.C."/>
            <person name="Welch R.A."/>
            <person name="Blattner F.R."/>
        </authorList>
    </citation>
    <scope>NUCLEOTIDE SEQUENCE [LARGE SCALE GENOMIC DNA]</scope>
    <source>
        <strain>O157:H7 / EDL933 / ATCC 700927 / EHEC</strain>
    </source>
</reference>
<reference key="2">
    <citation type="journal article" date="2001" name="DNA Res.">
        <title>Complete genome sequence of enterohemorrhagic Escherichia coli O157:H7 and genomic comparison with a laboratory strain K-12.</title>
        <authorList>
            <person name="Hayashi T."/>
            <person name="Makino K."/>
            <person name="Ohnishi M."/>
            <person name="Kurokawa K."/>
            <person name="Ishii K."/>
            <person name="Yokoyama K."/>
            <person name="Han C.-G."/>
            <person name="Ohtsubo E."/>
            <person name="Nakayama K."/>
            <person name="Murata T."/>
            <person name="Tanaka M."/>
            <person name="Tobe T."/>
            <person name="Iida T."/>
            <person name="Takami H."/>
            <person name="Honda T."/>
            <person name="Sasakawa C."/>
            <person name="Ogasawara N."/>
            <person name="Yasunaga T."/>
            <person name="Kuhara S."/>
            <person name="Shiba T."/>
            <person name="Hattori M."/>
            <person name="Shinagawa H."/>
        </authorList>
    </citation>
    <scope>NUCLEOTIDE SEQUENCE [LARGE SCALE GENOMIC DNA]</scope>
    <source>
        <strain>O157:H7 / Sakai / RIMD 0509952 / EHEC</strain>
    </source>
</reference>
<evidence type="ECO:0000250" key="1"/>
<evidence type="ECO:0000255" key="2"/>
<evidence type="ECO:0000305" key="3"/>
<comment type="function">
    <text evidence="1">Molecular chaperone that interacts specifically with outer membrane proteins, thus maintaining the solubility of early folding intermediates during passage through the periplasm.</text>
</comment>
<comment type="subunit">
    <text evidence="1">Homotrimer.</text>
</comment>
<comment type="subcellular location">
    <subcellularLocation>
        <location evidence="1">Periplasm</location>
    </subcellularLocation>
</comment>
<comment type="similarity">
    <text evidence="3">Belongs to the Skp family.</text>
</comment>
<feature type="signal peptide" evidence="1">
    <location>
        <begin position="1"/>
        <end position="20"/>
    </location>
</feature>
<feature type="chain" id="PRO_0000045053" description="Chaperone protein Skp">
    <location>
        <begin position="21"/>
        <end position="161"/>
    </location>
</feature>
<feature type="region of interest" description="Lipopolysaccharide binding" evidence="2">
    <location>
        <begin position="97"/>
        <end position="108"/>
    </location>
</feature>
<protein>
    <recommendedName>
        <fullName>Chaperone protein Skp</fullName>
    </recommendedName>
</protein>
<sequence length="161" mass="17688">MKKWLLAAGLGLALATSAQAADKIAIVNMGSLFQQVAQKTGVSNTLENEFKGRASELQRMETDLQAKMKKLQSMKAGSDRTKLEKDVMAQRQTFAQKAQAFEQDRARRSNEERGKLVTRIQTAVKSVANSQDIDLVVDANAVAYNSSDVKDITADVLKQVK</sequence>